<sequence length="224" mass="24522">MNEPVLECRALHKRFVQGILDVEVLHGVDLRIRRGQRLAIMGASGSGKSTLLHLLGGLDTPTSGKVLMDGIDLAALNERRRAELRNKTLGFVYQFHHLLGEFTVLENVAMPLLIGGASVARARDAAAALLRRVGLGKRIEHKPGELSGGERQRAAIARALVTRPKCVLADEPTGNLDSKTAEQVYQLMLELNQEFGVSFLIVTHDASLAHKMDEVLHMEDGRLV</sequence>
<organism>
    <name type="scientific">Methylococcus capsulatus (strain ATCC 33009 / NCIMB 11132 / Bath)</name>
    <dbReference type="NCBI Taxonomy" id="243233"/>
    <lineage>
        <taxon>Bacteria</taxon>
        <taxon>Pseudomonadati</taxon>
        <taxon>Pseudomonadota</taxon>
        <taxon>Gammaproteobacteria</taxon>
        <taxon>Methylococcales</taxon>
        <taxon>Methylococcaceae</taxon>
        <taxon>Methylococcus</taxon>
    </lineage>
</organism>
<keyword id="KW-0067">ATP-binding</keyword>
<keyword id="KW-0997">Cell inner membrane</keyword>
<keyword id="KW-1003">Cell membrane</keyword>
<keyword id="KW-0472">Membrane</keyword>
<keyword id="KW-0547">Nucleotide-binding</keyword>
<keyword id="KW-1185">Reference proteome</keyword>
<keyword id="KW-1278">Translocase</keyword>
<keyword id="KW-0813">Transport</keyword>
<protein>
    <recommendedName>
        <fullName evidence="1">Lipoprotein-releasing system ATP-binding protein LolD</fullName>
        <ecNumber evidence="1">7.6.2.-</ecNumber>
    </recommendedName>
</protein>
<gene>
    <name evidence="1" type="primary">lolD</name>
    <name type="ordered locus">MCA2625</name>
</gene>
<comment type="function">
    <text evidence="1">Part of the ABC transporter complex LolCDE involved in the translocation of mature outer membrane-directed lipoproteins, from the inner membrane to the periplasmic chaperone, LolA. Responsible for the formation of the LolA-lipoprotein complex in an ATP-dependent manner.</text>
</comment>
<comment type="subunit">
    <text evidence="1">The complex is composed of two ATP-binding proteins (LolD) and two transmembrane proteins (LolC and LolE).</text>
</comment>
<comment type="subcellular location">
    <subcellularLocation>
        <location evidence="1">Cell inner membrane</location>
        <topology evidence="1">Peripheral membrane protein</topology>
    </subcellularLocation>
</comment>
<comment type="similarity">
    <text evidence="1">Belongs to the ABC transporter superfamily. Lipoprotein translocase (TC 3.A.1.125) family.</text>
</comment>
<feature type="chain" id="PRO_0000272107" description="Lipoprotein-releasing system ATP-binding protein LolD">
    <location>
        <begin position="1"/>
        <end position="224"/>
    </location>
</feature>
<feature type="domain" description="ABC transporter" evidence="1">
    <location>
        <begin position="6"/>
        <end position="224"/>
    </location>
</feature>
<feature type="binding site" evidence="1">
    <location>
        <begin position="42"/>
        <end position="49"/>
    </location>
    <ligand>
        <name>ATP</name>
        <dbReference type="ChEBI" id="CHEBI:30616"/>
    </ligand>
</feature>
<name>LOLD_METCA</name>
<accession>Q604C1</accession>
<reference key="1">
    <citation type="journal article" date="2004" name="PLoS Biol.">
        <title>Genomic insights into methanotrophy: the complete genome sequence of Methylococcus capsulatus (Bath).</title>
        <authorList>
            <person name="Ward N.L."/>
            <person name="Larsen O."/>
            <person name="Sakwa J."/>
            <person name="Bruseth L."/>
            <person name="Khouri H.M."/>
            <person name="Durkin A.S."/>
            <person name="Dimitrov G."/>
            <person name="Jiang L."/>
            <person name="Scanlan D."/>
            <person name="Kang K.H."/>
            <person name="Lewis M.R."/>
            <person name="Nelson K.E."/>
            <person name="Methe B.A."/>
            <person name="Wu M."/>
            <person name="Heidelberg J.F."/>
            <person name="Paulsen I.T."/>
            <person name="Fouts D.E."/>
            <person name="Ravel J."/>
            <person name="Tettelin H."/>
            <person name="Ren Q."/>
            <person name="Read T.D."/>
            <person name="DeBoy R.T."/>
            <person name="Seshadri R."/>
            <person name="Salzberg S.L."/>
            <person name="Jensen H.B."/>
            <person name="Birkeland N.K."/>
            <person name="Nelson W.C."/>
            <person name="Dodson R.J."/>
            <person name="Grindhaug S.H."/>
            <person name="Holt I.E."/>
            <person name="Eidhammer I."/>
            <person name="Jonasen I."/>
            <person name="Vanaken S."/>
            <person name="Utterback T.R."/>
            <person name="Feldblyum T.V."/>
            <person name="Fraser C.M."/>
            <person name="Lillehaug J.R."/>
            <person name="Eisen J.A."/>
        </authorList>
    </citation>
    <scope>NUCLEOTIDE SEQUENCE [LARGE SCALE GENOMIC DNA]</scope>
    <source>
        <strain>ATCC 33009 / NCIMB 11132 / Bath</strain>
    </source>
</reference>
<evidence type="ECO:0000255" key="1">
    <source>
        <dbReference type="HAMAP-Rule" id="MF_01708"/>
    </source>
</evidence>
<proteinExistence type="inferred from homology"/>
<dbReference type="EC" id="7.6.2.-" evidence="1"/>
<dbReference type="EMBL" id="AE017282">
    <property type="protein sequence ID" value="AAU91274.1"/>
    <property type="molecule type" value="Genomic_DNA"/>
</dbReference>
<dbReference type="RefSeq" id="WP_010961838.1">
    <property type="nucleotide sequence ID" value="NC_002977.6"/>
</dbReference>
<dbReference type="SMR" id="Q604C1"/>
<dbReference type="STRING" id="243233.MCA2625"/>
<dbReference type="GeneID" id="88224808"/>
<dbReference type="KEGG" id="mca:MCA2625"/>
<dbReference type="eggNOG" id="COG1136">
    <property type="taxonomic scope" value="Bacteria"/>
</dbReference>
<dbReference type="HOGENOM" id="CLU_000604_1_22_6"/>
<dbReference type="Proteomes" id="UP000006821">
    <property type="component" value="Chromosome"/>
</dbReference>
<dbReference type="GO" id="GO:0005886">
    <property type="term" value="C:plasma membrane"/>
    <property type="evidence" value="ECO:0007669"/>
    <property type="project" value="UniProtKB-SubCell"/>
</dbReference>
<dbReference type="GO" id="GO:0005524">
    <property type="term" value="F:ATP binding"/>
    <property type="evidence" value="ECO:0007669"/>
    <property type="project" value="UniProtKB-KW"/>
</dbReference>
<dbReference type="GO" id="GO:0016887">
    <property type="term" value="F:ATP hydrolysis activity"/>
    <property type="evidence" value="ECO:0007669"/>
    <property type="project" value="InterPro"/>
</dbReference>
<dbReference type="GO" id="GO:0022857">
    <property type="term" value="F:transmembrane transporter activity"/>
    <property type="evidence" value="ECO:0007669"/>
    <property type="project" value="TreeGrafter"/>
</dbReference>
<dbReference type="GO" id="GO:0044874">
    <property type="term" value="P:lipoprotein localization to outer membrane"/>
    <property type="evidence" value="ECO:0007669"/>
    <property type="project" value="TreeGrafter"/>
</dbReference>
<dbReference type="GO" id="GO:0089705">
    <property type="term" value="P:protein localization to outer membrane"/>
    <property type="evidence" value="ECO:0007669"/>
    <property type="project" value="TreeGrafter"/>
</dbReference>
<dbReference type="CDD" id="cd03255">
    <property type="entry name" value="ABC_MJ0796_LolCDE_FtsE"/>
    <property type="match status" value="1"/>
</dbReference>
<dbReference type="FunFam" id="3.40.50.300:FF:000230">
    <property type="entry name" value="Lipoprotein-releasing system ATP-binding protein LolD"/>
    <property type="match status" value="1"/>
</dbReference>
<dbReference type="Gene3D" id="3.40.50.300">
    <property type="entry name" value="P-loop containing nucleotide triphosphate hydrolases"/>
    <property type="match status" value="1"/>
</dbReference>
<dbReference type="InterPro" id="IPR003593">
    <property type="entry name" value="AAA+_ATPase"/>
</dbReference>
<dbReference type="InterPro" id="IPR003439">
    <property type="entry name" value="ABC_transporter-like_ATP-bd"/>
</dbReference>
<dbReference type="InterPro" id="IPR017871">
    <property type="entry name" value="ABC_transporter-like_CS"/>
</dbReference>
<dbReference type="InterPro" id="IPR015854">
    <property type="entry name" value="ABC_transpr_LolD-like"/>
</dbReference>
<dbReference type="InterPro" id="IPR011924">
    <property type="entry name" value="LolD_lipo_ATP-bd"/>
</dbReference>
<dbReference type="InterPro" id="IPR017911">
    <property type="entry name" value="MacB-like_ATP-bd"/>
</dbReference>
<dbReference type="InterPro" id="IPR027417">
    <property type="entry name" value="P-loop_NTPase"/>
</dbReference>
<dbReference type="NCBIfam" id="TIGR02211">
    <property type="entry name" value="LolD_lipo_ex"/>
    <property type="match status" value="1"/>
</dbReference>
<dbReference type="PANTHER" id="PTHR24220">
    <property type="entry name" value="IMPORT ATP-BINDING PROTEIN"/>
    <property type="match status" value="1"/>
</dbReference>
<dbReference type="PANTHER" id="PTHR24220:SF689">
    <property type="entry name" value="LIPOPROTEIN-RELEASING SYSTEM ATP-BINDING PROTEIN LOLD"/>
    <property type="match status" value="1"/>
</dbReference>
<dbReference type="Pfam" id="PF00005">
    <property type="entry name" value="ABC_tran"/>
    <property type="match status" value="1"/>
</dbReference>
<dbReference type="SMART" id="SM00382">
    <property type="entry name" value="AAA"/>
    <property type="match status" value="1"/>
</dbReference>
<dbReference type="SUPFAM" id="SSF52540">
    <property type="entry name" value="P-loop containing nucleoside triphosphate hydrolases"/>
    <property type="match status" value="1"/>
</dbReference>
<dbReference type="PROSITE" id="PS00211">
    <property type="entry name" value="ABC_TRANSPORTER_1"/>
    <property type="match status" value="1"/>
</dbReference>
<dbReference type="PROSITE" id="PS50893">
    <property type="entry name" value="ABC_TRANSPORTER_2"/>
    <property type="match status" value="1"/>
</dbReference>
<dbReference type="PROSITE" id="PS51244">
    <property type="entry name" value="LOLD"/>
    <property type="match status" value="1"/>
</dbReference>